<sequence>MKTITTFENKKVLVLGLARSGEAAARLLAKLGAIVTVNDGKPFDENPTAQSLLEEGIKVVCGSHPLELLDEDFCYMIKNPGIPYNNPMVKKALEKQIPVLTEVELAYLVSESQLIGITGSNGKTTTTTMIAEVLNAGGQRGLLAGNIGFPASEVVQAANDKDTLVMELSSFQLMGVKEFRPHIAVITNLMPTHLDYHGSFEDYVAAKWNIQNQMSSSDFLVLNFNQGISKELAKTTKATIVPFSTTEKVDGAYVQDKQLFYKGENIMSVDDIGVPGSHNVENALATIAVAKLAGISNQVIRETLSNFGGVKHRLQSLGKVHGISFYNDSKSTNILATQKALSGFDNTKVILIAGGLDRGNEFDELIPDITGLKHMVVLGESASRVKRAAQKAGVTYSDALDVRDAVHKAYEVAQQGDVILLSPANASWDMYKNFEVRGDEFIDTFESLRGE</sequence>
<feature type="chain" id="PRO_0000109094" description="UDP-N-acetylmuramoylalanine--D-glutamate ligase">
    <location>
        <begin position="1"/>
        <end position="451"/>
    </location>
</feature>
<feature type="binding site" evidence="1">
    <location>
        <begin position="119"/>
        <end position="125"/>
    </location>
    <ligand>
        <name>ATP</name>
        <dbReference type="ChEBI" id="CHEBI:30616"/>
    </ligand>
</feature>
<feature type="turn" evidence="2">
    <location>
        <begin position="6"/>
        <end position="9"/>
    </location>
</feature>
<feature type="strand" evidence="2">
    <location>
        <begin position="11"/>
        <end position="15"/>
    </location>
</feature>
<feature type="turn" evidence="2">
    <location>
        <begin position="18"/>
        <end position="20"/>
    </location>
</feature>
<feature type="helix" evidence="2">
    <location>
        <begin position="21"/>
        <end position="30"/>
    </location>
</feature>
<feature type="strand" evidence="2">
    <location>
        <begin position="34"/>
        <end position="41"/>
    </location>
</feature>
<feature type="helix" evidence="2">
    <location>
        <begin position="43"/>
        <end position="45"/>
    </location>
</feature>
<feature type="helix" evidence="2">
    <location>
        <begin position="47"/>
        <end position="54"/>
    </location>
</feature>
<feature type="strand" evidence="2">
    <location>
        <begin position="58"/>
        <end position="62"/>
    </location>
</feature>
<feature type="helix" evidence="2">
    <location>
        <begin position="66"/>
        <end position="70"/>
    </location>
</feature>
<feature type="strand" evidence="2">
    <location>
        <begin position="73"/>
        <end position="78"/>
    </location>
</feature>
<feature type="helix" evidence="2">
    <location>
        <begin position="87"/>
        <end position="94"/>
    </location>
</feature>
<feature type="helix" evidence="2">
    <location>
        <begin position="102"/>
        <end position="109"/>
    </location>
</feature>
<feature type="strand" evidence="2">
    <location>
        <begin position="112"/>
        <end position="118"/>
    </location>
</feature>
<feature type="helix" evidence="2">
    <location>
        <begin position="123"/>
        <end position="136"/>
    </location>
</feature>
<feature type="strand" evidence="2">
    <location>
        <begin position="141"/>
        <end position="149"/>
    </location>
</feature>
<feature type="helix" evidence="2">
    <location>
        <begin position="151"/>
        <end position="154"/>
    </location>
</feature>
<feature type="turn" evidence="2">
    <location>
        <begin position="155"/>
        <end position="157"/>
    </location>
</feature>
<feature type="strand" evidence="2">
    <location>
        <begin position="163"/>
        <end position="167"/>
    </location>
</feature>
<feature type="helix" evidence="2">
    <location>
        <begin position="170"/>
        <end position="173"/>
    </location>
</feature>
<feature type="strand" evidence="2">
    <location>
        <begin position="182"/>
        <end position="186"/>
    </location>
</feature>
<feature type="helix" evidence="2">
    <location>
        <begin position="194"/>
        <end position="197"/>
    </location>
</feature>
<feature type="helix" evidence="2">
    <location>
        <begin position="200"/>
        <end position="208"/>
    </location>
</feature>
<feature type="helix" evidence="2">
    <location>
        <begin position="209"/>
        <end position="211"/>
    </location>
</feature>
<feature type="strand" evidence="2">
    <location>
        <begin position="218"/>
        <end position="223"/>
    </location>
</feature>
<feature type="helix" evidence="2">
    <location>
        <begin position="227"/>
        <end position="233"/>
    </location>
</feature>
<feature type="strand" evidence="2">
    <location>
        <begin position="237"/>
        <end position="247"/>
    </location>
</feature>
<feature type="strand" evidence="2">
    <location>
        <begin position="250"/>
        <end position="255"/>
    </location>
</feature>
<feature type="strand" evidence="2">
    <location>
        <begin position="258"/>
        <end position="261"/>
    </location>
</feature>
<feature type="strand" evidence="2">
    <location>
        <begin position="264"/>
        <end position="268"/>
    </location>
</feature>
<feature type="helix" evidence="2">
    <location>
        <begin position="269"/>
        <end position="271"/>
    </location>
</feature>
<feature type="strand" evidence="2">
    <location>
        <begin position="272"/>
        <end position="274"/>
    </location>
</feature>
<feature type="helix" evidence="2">
    <location>
        <begin position="277"/>
        <end position="293"/>
    </location>
</feature>
<feature type="helix" evidence="2">
    <location>
        <begin position="297"/>
        <end position="306"/>
    </location>
</feature>
<feature type="strand" evidence="2">
    <location>
        <begin position="313"/>
        <end position="320"/>
    </location>
</feature>
<feature type="strand" evidence="2">
    <location>
        <begin position="323"/>
        <end position="327"/>
    </location>
</feature>
<feature type="helix" evidence="2">
    <location>
        <begin position="334"/>
        <end position="342"/>
    </location>
</feature>
<feature type="helix" evidence="2">
    <location>
        <begin position="346"/>
        <end position="348"/>
    </location>
</feature>
<feature type="strand" evidence="2">
    <location>
        <begin position="349"/>
        <end position="353"/>
    </location>
</feature>
<feature type="helix" evidence="2">
    <location>
        <begin position="363"/>
        <end position="365"/>
    </location>
</feature>
<feature type="helix" evidence="2">
    <location>
        <begin position="366"/>
        <end position="369"/>
    </location>
</feature>
<feature type="strand" evidence="2">
    <location>
        <begin position="373"/>
        <end position="377"/>
    </location>
</feature>
<feature type="helix" evidence="2">
    <location>
        <begin position="382"/>
        <end position="391"/>
    </location>
</feature>
<feature type="strand" evidence="2">
    <location>
        <begin position="396"/>
        <end position="398"/>
    </location>
</feature>
<feature type="helix" evidence="2">
    <location>
        <begin position="402"/>
        <end position="412"/>
    </location>
</feature>
<feature type="strand" evidence="2">
    <location>
        <begin position="418"/>
        <end position="421"/>
    </location>
</feature>
<feature type="turn" evidence="2">
    <location>
        <begin position="428"/>
        <end position="430"/>
    </location>
</feature>
<feature type="strand" evidence="2">
    <location>
        <begin position="431"/>
        <end position="433"/>
    </location>
</feature>
<feature type="helix" evidence="2">
    <location>
        <begin position="434"/>
        <end position="449"/>
    </location>
</feature>
<accession>Q8E186</accession>
<name>MURD_STRA5</name>
<gene>
    <name evidence="1" type="primary">murD</name>
    <name type="ordered locus">SAG0475</name>
</gene>
<protein>
    <recommendedName>
        <fullName evidence="1">UDP-N-acetylmuramoylalanine--D-glutamate ligase</fullName>
        <ecNumber evidence="1">6.3.2.9</ecNumber>
    </recommendedName>
    <alternativeName>
        <fullName evidence="1">D-glutamic acid-adding enzyme</fullName>
    </alternativeName>
    <alternativeName>
        <fullName evidence="1">UDP-N-acetylmuramoyl-L-alanyl-D-glutamate synthetase</fullName>
    </alternativeName>
</protein>
<proteinExistence type="evidence at protein level"/>
<dbReference type="EC" id="6.3.2.9" evidence="1"/>
<dbReference type="EMBL" id="AE009948">
    <property type="protein sequence ID" value="AAM99377.1"/>
    <property type="molecule type" value="Genomic_DNA"/>
</dbReference>
<dbReference type="RefSeq" id="NP_687505.1">
    <property type="nucleotide sequence ID" value="NC_004116.1"/>
</dbReference>
<dbReference type="RefSeq" id="WP_000849681.1">
    <property type="nucleotide sequence ID" value="NC_004116.1"/>
</dbReference>
<dbReference type="PDB" id="3LK7">
    <property type="method" value="X-ray"/>
    <property type="resolution" value="1.50 A"/>
    <property type="chains" value="A=1-451"/>
</dbReference>
<dbReference type="PDBsum" id="3LK7"/>
<dbReference type="SMR" id="Q8E186"/>
<dbReference type="STRING" id="208435.SAG0475"/>
<dbReference type="DNASU" id="1013278"/>
<dbReference type="KEGG" id="sag:SAG0475"/>
<dbReference type="PATRIC" id="fig|208435.3.peg.473"/>
<dbReference type="HOGENOM" id="CLU_032540_0_1_9"/>
<dbReference type="OrthoDB" id="9809796at2"/>
<dbReference type="UniPathway" id="UPA00219"/>
<dbReference type="EvolutionaryTrace" id="Q8E186"/>
<dbReference type="Proteomes" id="UP000000821">
    <property type="component" value="Chromosome"/>
</dbReference>
<dbReference type="GO" id="GO:0005737">
    <property type="term" value="C:cytoplasm"/>
    <property type="evidence" value="ECO:0007669"/>
    <property type="project" value="UniProtKB-SubCell"/>
</dbReference>
<dbReference type="GO" id="GO:0005524">
    <property type="term" value="F:ATP binding"/>
    <property type="evidence" value="ECO:0007669"/>
    <property type="project" value="UniProtKB-UniRule"/>
</dbReference>
<dbReference type="GO" id="GO:0008764">
    <property type="term" value="F:UDP-N-acetylmuramoylalanine-D-glutamate ligase activity"/>
    <property type="evidence" value="ECO:0007669"/>
    <property type="project" value="UniProtKB-UniRule"/>
</dbReference>
<dbReference type="GO" id="GO:0051301">
    <property type="term" value="P:cell division"/>
    <property type="evidence" value="ECO:0007669"/>
    <property type="project" value="UniProtKB-KW"/>
</dbReference>
<dbReference type="GO" id="GO:0071555">
    <property type="term" value="P:cell wall organization"/>
    <property type="evidence" value="ECO:0007669"/>
    <property type="project" value="UniProtKB-KW"/>
</dbReference>
<dbReference type="GO" id="GO:0009252">
    <property type="term" value="P:peptidoglycan biosynthetic process"/>
    <property type="evidence" value="ECO:0007669"/>
    <property type="project" value="UniProtKB-UniRule"/>
</dbReference>
<dbReference type="GO" id="GO:0008360">
    <property type="term" value="P:regulation of cell shape"/>
    <property type="evidence" value="ECO:0007669"/>
    <property type="project" value="UniProtKB-KW"/>
</dbReference>
<dbReference type="Gene3D" id="3.90.190.20">
    <property type="entry name" value="Mur ligase, C-terminal domain"/>
    <property type="match status" value="1"/>
</dbReference>
<dbReference type="Gene3D" id="3.40.1190.10">
    <property type="entry name" value="Mur-like, catalytic domain"/>
    <property type="match status" value="1"/>
</dbReference>
<dbReference type="Gene3D" id="3.40.50.720">
    <property type="entry name" value="NAD(P)-binding Rossmann-like Domain"/>
    <property type="match status" value="1"/>
</dbReference>
<dbReference type="HAMAP" id="MF_00639">
    <property type="entry name" value="MurD"/>
    <property type="match status" value="1"/>
</dbReference>
<dbReference type="InterPro" id="IPR036565">
    <property type="entry name" value="Mur-like_cat_sf"/>
</dbReference>
<dbReference type="InterPro" id="IPR004101">
    <property type="entry name" value="Mur_ligase_C"/>
</dbReference>
<dbReference type="InterPro" id="IPR036615">
    <property type="entry name" value="Mur_ligase_C_dom_sf"/>
</dbReference>
<dbReference type="InterPro" id="IPR013221">
    <property type="entry name" value="Mur_ligase_cen"/>
</dbReference>
<dbReference type="InterPro" id="IPR005762">
    <property type="entry name" value="MurD"/>
</dbReference>
<dbReference type="NCBIfam" id="TIGR01087">
    <property type="entry name" value="murD"/>
    <property type="match status" value="1"/>
</dbReference>
<dbReference type="PANTHER" id="PTHR43692">
    <property type="entry name" value="UDP-N-ACETYLMURAMOYLALANINE--D-GLUTAMATE LIGASE"/>
    <property type="match status" value="1"/>
</dbReference>
<dbReference type="PANTHER" id="PTHR43692:SF1">
    <property type="entry name" value="UDP-N-ACETYLMURAMOYLALANINE--D-GLUTAMATE LIGASE"/>
    <property type="match status" value="1"/>
</dbReference>
<dbReference type="Pfam" id="PF02875">
    <property type="entry name" value="Mur_ligase_C"/>
    <property type="match status" value="1"/>
</dbReference>
<dbReference type="Pfam" id="PF08245">
    <property type="entry name" value="Mur_ligase_M"/>
    <property type="match status" value="1"/>
</dbReference>
<dbReference type="Pfam" id="PF21799">
    <property type="entry name" value="MurD-like_N"/>
    <property type="match status" value="1"/>
</dbReference>
<dbReference type="SUPFAM" id="SSF51984">
    <property type="entry name" value="MurCD N-terminal domain"/>
    <property type="match status" value="1"/>
</dbReference>
<dbReference type="SUPFAM" id="SSF53623">
    <property type="entry name" value="MurD-like peptide ligases, catalytic domain"/>
    <property type="match status" value="1"/>
</dbReference>
<dbReference type="SUPFAM" id="SSF53244">
    <property type="entry name" value="MurD-like peptide ligases, peptide-binding domain"/>
    <property type="match status" value="1"/>
</dbReference>
<evidence type="ECO:0000255" key="1">
    <source>
        <dbReference type="HAMAP-Rule" id="MF_00639"/>
    </source>
</evidence>
<evidence type="ECO:0007829" key="2">
    <source>
        <dbReference type="PDB" id="3LK7"/>
    </source>
</evidence>
<comment type="function">
    <text evidence="1">Cell wall formation. Catalyzes the addition of glutamate to the nucleotide precursor UDP-N-acetylmuramoyl-L-alanine (UMA).</text>
</comment>
<comment type="catalytic activity">
    <reaction evidence="1">
        <text>UDP-N-acetyl-alpha-D-muramoyl-L-alanine + D-glutamate + ATP = UDP-N-acetyl-alpha-D-muramoyl-L-alanyl-D-glutamate + ADP + phosphate + H(+)</text>
        <dbReference type="Rhea" id="RHEA:16429"/>
        <dbReference type="ChEBI" id="CHEBI:15378"/>
        <dbReference type="ChEBI" id="CHEBI:29986"/>
        <dbReference type="ChEBI" id="CHEBI:30616"/>
        <dbReference type="ChEBI" id="CHEBI:43474"/>
        <dbReference type="ChEBI" id="CHEBI:83898"/>
        <dbReference type="ChEBI" id="CHEBI:83900"/>
        <dbReference type="ChEBI" id="CHEBI:456216"/>
        <dbReference type="EC" id="6.3.2.9"/>
    </reaction>
</comment>
<comment type="pathway">
    <text evidence="1">Cell wall biogenesis; peptidoglycan biosynthesis.</text>
</comment>
<comment type="subcellular location">
    <subcellularLocation>
        <location evidence="1">Cytoplasm</location>
    </subcellularLocation>
</comment>
<comment type="similarity">
    <text evidence="1">Belongs to the MurCDEF family.</text>
</comment>
<organism>
    <name type="scientific">Streptococcus agalactiae serotype V (strain ATCC BAA-611 / 2603 V/R)</name>
    <dbReference type="NCBI Taxonomy" id="208435"/>
    <lineage>
        <taxon>Bacteria</taxon>
        <taxon>Bacillati</taxon>
        <taxon>Bacillota</taxon>
        <taxon>Bacilli</taxon>
        <taxon>Lactobacillales</taxon>
        <taxon>Streptococcaceae</taxon>
        <taxon>Streptococcus</taxon>
    </lineage>
</organism>
<reference key="1">
    <citation type="journal article" date="2002" name="Proc. Natl. Acad. Sci. U.S.A.">
        <title>Complete genome sequence and comparative genomic analysis of an emerging human pathogen, serotype V Streptococcus agalactiae.</title>
        <authorList>
            <person name="Tettelin H."/>
            <person name="Masignani V."/>
            <person name="Cieslewicz M.J."/>
            <person name="Eisen J.A."/>
            <person name="Peterson S.N."/>
            <person name="Wessels M.R."/>
            <person name="Paulsen I.T."/>
            <person name="Nelson K.E."/>
            <person name="Margarit I."/>
            <person name="Read T.D."/>
            <person name="Madoff L.C."/>
            <person name="Wolf A.M."/>
            <person name="Beanan M.J."/>
            <person name="Brinkac L.M."/>
            <person name="Daugherty S.C."/>
            <person name="DeBoy R.T."/>
            <person name="Durkin A.S."/>
            <person name="Kolonay J.F."/>
            <person name="Madupu R."/>
            <person name="Lewis M.R."/>
            <person name="Radune D."/>
            <person name="Fedorova N.B."/>
            <person name="Scanlan D."/>
            <person name="Khouri H.M."/>
            <person name="Mulligan S."/>
            <person name="Carty H.A."/>
            <person name="Cline R.T."/>
            <person name="Van Aken S.E."/>
            <person name="Gill J."/>
            <person name="Scarselli M."/>
            <person name="Mora M."/>
            <person name="Iacobini E.T."/>
            <person name="Brettoni C."/>
            <person name="Galli G."/>
            <person name="Mariani M."/>
            <person name="Vegni F."/>
            <person name="Maione D."/>
            <person name="Rinaudo D."/>
            <person name="Rappuoli R."/>
            <person name="Telford J.L."/>
            <person name="Kasper D.L."/>
            <person name="Grandi G."/>
            <person name="Fraser C.M."/>
        </authorList>
    </citation>
    <scope>NUCLEOTIDE SEQUENCE [LARGE SCALE GENOMIC DNA]</scope>
    <source>
        <strain>ATCC BAA-611 / 2603 V/R</strain>
    </source>
</reference>
<keyword id="KW-0002">3D-structure</keyword>
<keyword id="KW-0067">ATP-binding</keyword>
<keyword id="KW-0131">Cell cycle</keyword>
<keyword id="KW-0132">Cell division</keyword>
<keyword id="KW-0133">Cell shape</keyword>
<keyword id="KW-0961">Cell wall biogenesis/degradation</keyword>
<keyword id="KW-0963">Cytoplasm</keyword>
<keyword id="KW-0436">Ligase</keyword>
<keyword id="KW-0547">Nucleotide-binding</keyword>
<keyword id="KW-0573">Peptidoglycan synthesis</keyword>
<keyword id="KW-1185">Reference proteome</keyword>